<organism>
    <name type="scientific">Acidovorax ebreus (strain TPSY)</name>
    <name type="common">Diaphorobacter sp. (strain TPSY)</name>
    <dbReference type="NCBI Taxonomy" id="535289"/>
    <lineage>
        <taxon>Bacteria</taxon>
        <taxon>Pseudomonadati</taxon>
        <taxon>Pseudomonadota</taxon>
        <taxon>Betaproteobacteria</taxon>
        <taxon>Burkholderiales</taxon>
        <taxon>Comamonadaceae</taxon>
        <taxon>Diaphorobacter</taxon>
    </lineage>
</organism>
<protein>
    <recommendedName>
        <fullName evidence="1">Ribosome-recycling factor</fullName>
        <shortName evidence="1">RRF</shortName>
    </recommendedName>
    <alternativeName>
        <fullName evidence="1">Ribosome-releasing factor</fullName>
    </alternativeName>
</protein>
<sequence length="186" mass="20609">MTIADIKKTTEAKMDQSIAAFKNNLAKIRTGRANPQLLDTIHVEYYGSMVPLSQVANVALLDARTISVQPWEKNMGAKIEKAIRESDLGLNPASMGDLIRVPMPPMSEERRKEMTKLARSEGEGAKVAIRNLRRDANEGVKKLVKDKLASEDDQKRAEADVQKTTDKHIAEIDALVAAKEQEIMAI</sequence>
<evidence type="ECO:0000255" key="1">
    <source>
        <dbReference type="HAMAP-Rule" id="MF_00040"/>
    </source>
</evidence>
<comment type="function">
    <text evidence="1">Responsible for the release of ribosomes from messenger RNA at the termination of protein biosynthesis. May increase the efficiency of translation by recycling ribosomes from one round of translation to another.</text>
</comment>
<comment type="subcellular location">
    <subcellularLocation>
        <location evidence="1">Cytoplasm</location>
    </subcellularLocation>
</comment>
<comment type="similarity">
    <text evidence="1">Belongs to the RRF family.</text>
</comment>
<proteinExistence type="inferred from homology"/>
<reference key="1">
    <citation type="submission" date="2009-01" db="EMBL/GenBank/DDBJ databases">
        <title>Complete sequence of Diaphorobacter sp. TPSY.</title>
        <authorList>
            <consortium name="US DOE Joint Genome Institute"/>
            <person name="Lucas S."/>
            <person name="Copeland A."/>
            <person name="Lapidus A."/>
            <person name="Glavina del Rio T."/>
            <person name="Tice H."/>
            <person name="Bruce D."/>
            <person name="Goodwin L."/>
            <person name="Pitluck S."/>
            <person name="Chertkov O."/>
            <person name="Brettin T."/>
            <person name="Detter J.C."/>
            <person name="Han C."/>
            <person name="Larimer F."/>
            <person name="Land M."/>
            <person name="Hauser L."/>
            <person name="Kyrpides N."/>
            <person name="Mikhailova N."/>
            <person name="Coates J.D."/>
        </authorList>
    </citation>
    <scope>NUCLEOTIDE SEQUENCE [LARGE SCALE GENOMIC DNA]</scope>
    <source>
        <strain>TPSY</strain>
    </source>
</reference>
<keyword id="KW-0963">Cytoplasm</keyword>
<keyword id="KW-0648">Protein biosynthesis</keyword>
<keyword id="KW-1185">Reference proteome</keyword>
<accession>B9MGM0</accession>
<feature type="chain" id="PRO_1000194922" description="Ribosome-recycling factor">
    <location>
        <begin position="1"/>
        <end position="186"/>
    </location>
</feature>
<name>RRF_ACIET</name>
<gene>
    <name evidence="1" type="primary">frr</name>
    <name type="ordered locus">Dtpsy_1226</name>
</gene>
<dbReference type="EMBL" id="CP001392">
    <property type="protein sequence ID" value="ACM32693.1"/>
    <property type="molecule type" value="Genomic_DNA"/>
</dbReference>
<dbReference type="RefSeq" id="WP_011805777.1">
    <property type="nucleotide sequence ID" value="NC_011992.1"/>
</dbReference>
<dbReference type="SMR" id="B9MGM0"/>
<dbReference type="GeneID" id="84682029"/>
<dbReference type="KEGG" id="dia:Dtpsy_1226"/>
<dbReference type="eggNOG" id="COG0233">
    <property type="taxonomic scope" value="Bacteria"/>
</dbReference>
<dbReference type="HOGENOM" id="CLU_073981_2_0_4"/>
<dbReference type="Proteomes" id="UP000000450">
    <property type="component" value="Chromosome"/>
</dbReference>
<dbReference type="GO" id="GO:0005829">
    <property type="term" value="C:cytosol"/>
    <property type="evidence" value="ECO:0007669"/>
    <property type="project" value="GOC"/>
</dbReference>
<dbReference type="GO" id="GO:0043023">
    <property type="term" value="F:ribosomal large subunit binding"/>
    <property type="evidence" value="ECO:0007669"/>
    <property type="project" value="TreeGrafter"/>
</dbReference>
<dbReference type="GO" id="GO:0002184">
    <property type="term" value="P:cytoplasmic translational termination"/>
    <property type="evidence" value="ECO:0007669"/>
    <property type="project" value="TreeGrafter"/>
</dbReference>
<dbReference type="CDD" id="cd00520">
    <property type="entry name" value="RRF"/>
    <property type="match status" value="1"/>
</dbReference>
<dbReference type="FunFam" id="1.10.132.20:FF:000001">
    <property type="entry name" value="Ribosome-recycling factor"/>
    <property type="match status" value="1"/>
</dbReference>
<dbReference type="FunFam" id="3.30.1360.40:FF:000001">
    <property type="entry name" value="Ribosome-recycling factor"/>
    <property type="match status" value="1"/>
</dbReference>
<dbReference type="Gene3D" id="3.30.1360.40">
    <property type="match status" value="1"/>
</dbReference>
<dbReference type="Gene3D" id="1.10.132.20">
    <property type="entry name" value="Ribosome-recycling factor"/>
    <property type="match status" value="1"/>
</dbReference>
<dbReference type="HAMAP" id="MF_00040">
    <property type="entry name" value="RRF"/>
    <property type="match status" value="1"/>
</dbReference>
<dbReference type="InterPro" id="IPR002661">
    <property type="entry name" value="Ribosome_recyc_fac"/>
</dbReference>
<dbReference type="InterPro" id="IPR023584">
    <property type="entry name" value="Ribosome_recyc_fac_dom"/>
</dbReference>
<dbReference type="InterPro" id="IPR036191">
    <property type="entry name" value="RRF_sf"/>
</dbReference>
<dbReference type="NCBIfam" id="TIGR00496">
    <property type="entry name" value="frr"/>
    <property type="match status" value="1"/>
</dbReference>
<dbReference type="PANTHER" id="PTHR20982:SF3">
    <property type="entry name" value="MITOCHONDRIAL RIBOSOME RECYCLING FACTOR PSEUDO 1"/>
    <property type="match status" value="1"/>
</dbReference>
<dbReference type="PANTHER" id="PTHR20982">
    <property type="entry name" value="RIBOSOME RECYCLING FACTOR"/>
    <property type="match status" value="1"/>
</dbReference>
<dbReference type="Pfam" id="PF01765">
    <property type="entry name" value="RRF"/>
    <property type="match status" value="1"/>
</dbReference>
<dbReference type="SUPFAM" id="SSF55194">
    <property type="entry name" value="Ribosome recycling factor, RRF"/>
    <property type="match status" value="1"/>
</dbReference>